<feature type="chain" id="PRO_0000133381" description="Protein E6">
    <location>
        <begin position="1"/>
        <end position="151"/>
    </location>
</feature>
<feature type="zinc finger region" evidence="1">
    <location>
        <begin position="30"/>
        <end position="66"/>
    </location>
</feature>
<feature type="zinc finger region" evidence="1">
    <location>
        <begin position="103"/>
        <end position="139"/>
    </location>
</feature>
<feature type="short sequence motif" description="PDZ-binding domain" evidence="1">
    <location>
        <begin position="149"/>
        <end position="151"/>
    </location>
</feature>
<accession>Q9JH51</accession>
<organismHost>
    <name type="scientific">Homo sapiens</name>
    <name type="common">Human</name>
    <dbReference type="NCBI Taxonomy" id="9606"/>
</organismHost>
<comment type="function">
    <text evidence="1">Plays a major role in the induction and maintenance of cellular transformation. Acts mainly as an oncoprotein by stimulating the destruction of many host cell key regulatory proteins. E6 associates with host UBE3A/E6-AP ubiquitin-protein ligase, and inactivates tumor suppressors TP53 and TP73 by targeting them to the 26S proteasome for degradation. In turn, DNA damage and chromosomal instabilities increase and lead to cell proliferation and cancer development. The complex E6/E6AP targets several other substrates to degradation via the proteasome including host DLG1 or NFX1, a repressor of human telomerase reverse transcriptase (hTERT). The resulting increased expression of hTERT prevents the shortening of telomere length leading to cell immortalization. Other cellular targets including BAK1, Fas-associated death domain-containing protein (FADD) and procaspase 8, are degraded by E6/E6AP causing inhibition of apoptosis. E6 also inhibits immune response by interacting with host IRF3 and TYK2. These interactions prevent IRF3 transcriptional activities and inhibit TYK2-mediated JAK-STAT activation by interferon alpha resulting in inhibition of the interferon signaling pathway.</text>
</comment>
<comment type="subunit">
    <text evidence="1">Forms homodimers. Interacts with ubiquitin-protein ligase UBE3A/E6-AP and thus forms a complex with human TP53. Interacts with human NFX1 and MAGI3. Interacts with human IRF3; this interaction inhibits the establishment of antiviral state. Interacts with human TYK2; this interaction inhibits JAK-STAT activation by interferon alpha. Interacts with host DLG1; this interaction leads to the proteasomal degradation of DLG1.</text>
</comment>
<comment type="subcellular location">
    <subcellularLocation>
        <location evidence="1">Host cytoplasm</location>
    </subcellularLocation>
    <subcellularLocation>
        <location evidence="1">Host nucleus</location>
    </subcellularLocation>
</comment>
<comment type="miscellaneous">
    <text evidence="1">Belongs to the high risk human alphapapillomavirus family. The cancer-causing human papillomavirus E6 protein has a unique carboxy terminal PDZ domain containing substrate.</text>
</comment>
<comment type="similarity">
    <text evidence="2">Belongs to the papillomaviridae E6 protein family.</text>
</comment>
<reference key="1">
    <citation type="journal article" date="2000" name="Clin. Diagn. Lab. Immunol.">
        <title>Molecular cloning and nucleotide sequence analysis of a novel human papillomavirus (type 82) associated with vaginal intraepithelial neoplasia.</title>
        <authorList>
            <person name="Kino N."/>
            <person name="Sata T."/>
            <person name="Sato Y."/>
            <person name="Sugase M."/>
            <person name="Matsukura T."/>
        </authorList>
    </citation>
    <scope>NUCLEOTIDE SEQUENCE [GENOMIC DNA]</scope>
</reference>
<protein>
    <recommendedName>
        <fullName evidence="1">Protein E6</fullName>
    </recommendedName>
</protein>
<name>VE6_HPV69</name>
<dbReference type="EMBL" id="AB027020">
    <property type="protein sequence ID" value="BAA90727.1"/>
    <property type="molecule type" value="Genomic_DNA"/>
</dbReference>
<dbReference type="SMR" id="Q9JH51"/>
<dbReference type="Proteomes" id="UP000007674">
    <property type="component" value="Genome"/>
</dbReference>
<dbReference type="GO" id="GO:0030430">
    <property type="term" value="C:host cell cytoplasm"/>
    <property type="evidence" value="ECO:0007669"/>
    <property type="project" value="UniProtKB-SubCell"/>
</dbReference>
<dbReference type="GO" id="GO:0042025">
    <property type="term" value="C:host cell nucleus"/>
    <property type="evidence" value="ECO:0007669"/>
    <property type="project" value="UniProtKB-SubCell"/>
</dbReference>
<dbReference type="GO" id="GO:0003677">
    <property type="term" value="F:DNA binding"/>
    <property type="evidence" value="ECO:0007669"/>
    <property type="project" value="UniProtKB-UniRule"/>
</dbReference>
<dbReference type="GO" id="GO:0030165">
    <property type="term" value="F:PDZ domain binding"/>
    <property type="evidence" value="ECO:0007669"/>
    <property type="project" value="UniProtKB-UniRule"/>
</dbReference>
<dbReference type="GO" id="GO:0008270">
    <property type="term" value="F:zinc ion binding"/>
    <property type="evidence" value="ECO:0007669"/>
    <property type="project" value="UniProtKB-KW"/>
</dbReference>
<dbReference type="GO" id="GO:0006351">
    <property type="term" value="P:DNA-templated transcription"/>
    <property type="evidence" value="ECO:0007669"/>
    <property type="project" value="UniProtKB-UniRule"/>
</dbReference>
<dbReference type="GO" id="GO:0006355">
    <property type="term" value="P:regulation of DNA-templated transcription"/>
    <property type="evidence" value="ECO:0007669"/>
    <property type="project" value="UniProtKB-UniRule"/>
</dbReference>
<dbReference type="GO" id="GO:0052150">
    <property type="term" value="P:symbiont-mediated perturbation of host apoptosis"/>
    <property type="evidence" value="ECO:0007669"/>
    <property type="project" value="UniProtKB-KW"/>
</dbReference>
<dbReference type="GO" id="GO:0039648">
    <property type="term" value="P:symbiont-mediated perturbation of host ubiquitin-like protein modification"/>
    <property type="evidence" value="ECO:0007669"/>
    <property type="project" value="UniProtKB-UniRule"/>
</dbReference>
<dbReference type="GO" id="GO:0039548">
    <property type="term" value="P:symbiont-mediated suppression of host cytoplasmic pattern recognition receptor signaling pathway via inhibition of IRF3 activity"/>
    <property type="evidence" value="ECO:0007669"/>
    <property type="project" value="UniProtKB-UniRule"/>
</dbReference>
<dbReference type="GO" id="GO:0039502">
    <property type="term" value="P:symbiont-mediated suppression of host type I interferon-mediated signaling pathway"/>
    <property type="evidence" value="ECO:0007669"/>
    <property type="project" value="UniProtKB-UniRule"/>
</dbReference>
<dbReference type="FunFam" id="3.30.240.40:FF:000001">
    <property type="entry name" value="Protein E6"/>
    <property type="match status" value="1"/>
</dbReference>
<dbReference type="FunFam" id="3.30.240.40:FF:000002">
    <property type="entry name" value="Protein E6"/>
    <property type="match status" value="1"/>
</dbReference>
<dbReference type="Gene3D" id="3.30.240.40">
    <property type="entry name" value="E6 early regulatory protein"/>
    <property type="match status" value="2"/>
</dbReference>
<dbReference type="HAMAP" id="MF_04006">
    <property type="entry name" value="HPV_E6"/>
    <property type="match status" value="1"/>
</dbReference>
<dbReference type="InterPro" id="IPR001334">
    <property type="entry name" value="E6"/>
</dbReference>
<dbReference type="InterPro" id="IPR038575">
    <property type="entry name" value="E6_sf"/>
</dbReference>
<dbReference type="Pfam" id="PF00518">
    <property type="entry name" value="E6"/>
    <property type="match status" value="1"/>
</dbReference>
<dbReference type="SUPFAM" id="SSF161229">
    <property type="entry name" value="E6 C-terminal domain-like"/>
    <property type="match status" value="2"/>
</dbReference>
<gene>
    <name evidence="1" type="primary">E6</name>
</gene>
<proteinExistence type="inferred from homology"/>
<organism>
    <name type="scientific">Human papillomavirus 69</name>
    <dbReference type="NCBI Taxonomy" id="37121"/>
    <lineage>
        <taxon>Viruses</taxon>
        <taxon>Monodnaviria</taxon>
        <taxon>Shotokuvirae</taxon>
        <taxon>Cossaviricota</taxon>
        <taxon>Papovaviricetes</taxon>
        <taxon>Zurhausenvirales</taxon>
        <taxon>Papillomaviridae</taxon>
        <taxon>Firstpapillomavirinae</taxon>
        <taxon>Alphapapillomavirus</taxon>
        <taxon>Alphapapillomavirus 5</taxon>
    </lineage>
</organism>
<sequence length="151" mass="17945">MFQDPRERPRTIHELCEALNTPLQSLQVQCVYCKKTLEWADVYNFAICDLRIVYRNDSAYGACKKCIIFYSKIIEYRRYTSSVYGATLEARPKRSLCNLLIRCHRCQIPLGPEEKQRIVDEKRRFHEIAGYWKGLCTNCWRPRREATETQV</sequence>
<evidence type="ECO:0000255" key="1">
    <source>
        <dbReference type="HAMAP-Rule" id="MF_04006"/>
    </source>
</evidence>
<evidence type="ECO:0000305" key="2"/>
<keyword id="KW-0010">Activator</keyword>
<keyword id="KW-0238">DNA-binding</keyword>
<keyword id="KW-0244">Early protein</keyword>
<keyword id="KW-1035">Host cytoplasm</keyword>
<keyword id="KW-1048">Host nucleus</keyword>
<keyword id="KW-0945">Host-virus interaction</keyword>
<keyword id="KW-1090">Inhibition of host innate immune response by virus</keyword>
<keyword id="KW-1092">Inhibition of host IRF3 by virus</keyword>
<keyword id="KW-1113">Inhibition of host RLR pathway by virus</keyword>
<keyword id="KW-0479">Metal-binding</keyword>
<keyword id="KW-1119">Modulation of host cell apoptosis by virus</keyword>
<keyword id="KW-0553">Oncogene</keyword>
<keyword id="KW-0804">Transcription</keyword>
<keyword id="KW-0805">Transcription regulation</keyword>
<keyword id="KW-0899">Viral immunoevasion</keyword>
<keyword id="KW-0862">Zinc</keyword>
<keyword id="KW-0863">Zinc-finger</keyword>